<name>CML7_ARATH</name>
<reference key="1">
    <citation type="journal article" date="2000" name="Nature">
        <title>Sequence and analysis of chromosome 1 of the plant Arabidopsis thaliana.</title>
        <authorList>
            <person name="Theologis A."/>
            <person name="Ecker J.R."/>
            <person name="Palm C.J."/>
            <person name="Federspiel N.A."/>
            <person name="Kaul S."/>
            <person name="White O."/>
            <person name="Alonso J."/>
            <person name="Altafi H."/>
            <person name="Araujo R."/>
            <person name="Bowman C.L."/>
            <person name="Brooks S.Y."/>
            <person name="Buehler E."/>
            <person name="Chan A."/>
            <person name="Chao Q."/>
            <person name="Chen H."/>
            <person name="Cheuk R.F."/>
            <person name="Chin C.W."/>
            <person name="Chung M.K."/>
            <person name="Conn L."/>
            <person name="Conway A.B."/>
            <person name="Conway A.R."/>
            <person name="Creasy T.H."/>
            <person name="Dewar K."/>
            <person name="Dunn P."/>
            <person name="Etgu P."/>
            <person name="Feldblyum T.V."/>
            <person name="Feng J.-D."/>
            <person name="Fong B."/>
            <person name="Fujii C.Y."/>
            <person name="Gill J.E."/>
            <person name="Goldsmith A.D."/>
            <person name="Haas B."/>
            <person name="Hansen N.F."/>
            <person name="Hughes B."/>
            <person name="Huizar L."/>
            <person name="Hunter J.L."/>
            <person name="Jenkins J."/>
            <person name="Johnson-Hopson C."/>
            <person name="Khan S."/>
            <person name="Khaykin E."/>
            <person name="Kim C.J."/>
            <person name="Koo H.L."/>
            <person name="Kremenetskaia I."/>
            <person name="Kurtz D.B."/>
            <person name="Kwan A."/>
            <person name="Lam B."/>
            <person name="Langin-Hooper S."/>
            <person name="Lee A."/>
            <person name="Lee J.M."/>
            <person name="Lenz C.A."/>
            <person name="Li J.H."/>
            <person name="Li Y.-P."/>
            <person name="Lin X."/>
            <person name="Liu S.X."/>
            <person name="Liu Z.A."/>
            <person name="Luros J.S."/>
            <person name="Maiti R."/>
            <person name="Marziali A."/>
            <person name="Militscher J."/>
            <person name="Miranda M."/>
            <person name="Nguyen M."/>
            <person name="Nierman W.C."/>
            <person name="Osborne B.I."/>
            <person name="Pai G."/>
            <person name="Peterson J."/>
            <person name="Pham P.K."/>
            <person name="Rizzo M."/>
            <person name="Rooney T."/>
            <person name="Rowley D."/>
            <person name="Sakano H."/>
            <person name="Salzberg S.L."/>
            <person name="Schwartz J.R."/>
            <person name="Shinn P."/>
            <person name="Southwick A.M."/>
            <person name="Sun H."/>
            <person name="Tallon L.J."/>
            <person name="Tambunga G."/>
            <person name="Toriumi M.J."/>
            <person name="Town C.D."/>
            <person name="Utterback T."/>
            <person name="Van Aken S."/>
            <person name="Vaysberg M."/>
            <person name="Vysotskaia V.S."/>
            <person name="Walker M."/>
            <person name="Wu D."/>
            <person name="Yu G."/>
            <person name="Fraser C.M."/>
            <person name="Venter J.C."/>
            <person name="Davis R.W."/>
        </authorList>
    </citation>
    <scope>NUCLEOTIDE SEQUENCE [LARGE SCALE GENOMIC DNA]</scope>
    <source>
        <strain>cv. Columbia</strain>
    </source>
</reference>
<reference key="2">
    <citation type="journal article" date="2017" name="Plant J.">
        <title>Araport11: a complete reannotation of the Arabidopsis thaliana reference genome.</title>
        <authorList>
            <person name="Cheng C.Y."/>
            <person name="Krishnakumar V."/>
            <person name="Chan A.P."/>
            <person name="Thibaud-Nissen F."/>
            <person name="Schobel S."/>
            <person name="Town C.D."/>
        </authorList>
    </citation>
    <scope>GENOME REANNOTATION</scope>
    <source>
        <strain>cv. Columbia</strain>
    </source>
</reference>
<reference key="3">
    <citation type="journal article" date="2003" name="Science">
        <title>Empirical analysis of transcriptional activity in the Arabidopsis genome.</title>
        <authorList>
            <person name="Yamada K."/>
            <person name="Lim J."/>
            <person name="Dale J.M."/>
            <person name="Chen H."/>
            <person name="Shinn P."/>
            <person name="Palm C.J."/>
            <person name="Southwick A.M."/>
            <person name="Wu H.C."/>
            <person name="Kim C.J."/>
            <person name="Nguyen M."/>
            <person name="Pham P.K."/>
            <person name="Cheuk R.F."/>
            <person name="Karlin-Newmann G."/>
            <person name="Liu S.X."/>
            <person name="Lam B."/>
            <person name="Sakano H."/>
            <person name="Wu T."/>
            <person name="Yu G."/>
            <person name="Miranda M."/>
            <person name="Quach H.L."/>
            <person name="Tripp M."/>
            <person name="Chang C.H."/>
            <person name="Lee J.M."/>
            <person name="Toriumi M.J."/>
            <person name="Chan M.M."/>
            <person name="Tang C.C."/>
            <person name="Onodera C.S."/>
            <person name="Deng J.M."/>
            <person name="Akiyama K."/>
            <person name="Ansari Y."/>
            <person name="Arakawa T."/>
            <person name="Banh J."/>
            <person name="Banno F."/>
            <person name="Bowser L."/>
            <person name="Brooks S.Y."/>
            <person name="Carninci P."/>
            <person name="Chao Q."/>
            <person name="Choy N."/>
            <person name="Enju A."/>
            <person name="Goldsmith A.D."/>
            <person name="Gurjal M."/>
            <person name="Hansen N.F."/>
            <person name="Hayashizaki Y."/>
            <person name="Johnson-Hopson C."/>
            <person name="Hsuan V.W."/>
            <person name="Iida K."/>
            <person name="Karnes M."/>
            <person name="Khan S."/>
            <person name="Koesema E."/>
            <person name="Ishida J."/>
            <person name="Jiang P.X."/>
            <person name="Jones T."/>
            <person name="Kawai J."/>
            <person name="Kamiya A."/>
            <person name="Meyers C."/>
            <person name="Nakajima M."/>
            <person name="Narusaka M."/>
            <person name="Seki M."/>
            <person name="Sakurai T."/>
            <person name="Satou M."/>
            <person name="Tamse R."/>
            <person name="Vaysberg M."/>
            <person name="Wallender E.K."/>
            <person name="Wong C."/>
            <person name="Yamamura Y."/>
            <person name="Yuan S."/>
            <person name="Shinozaki K."/>
            <person name="Davis R.W."/>
            <person name="Theologis A."/>
            <person name="Ecker J.R."/>
        </authorList>
    </citation>
    <scope>NUCLEOTIDE SEQUENCE [LARGE SCALE MRNA]</scope>
    <source>
        <strain>cv. Columbia</strain>
    </source>
</reference>
<reference key="4">
    <citation type="journal article" date="2003" name="New Phytol.">
        <title>Calmodulins and related potential calcium sensors of Arabidopsis.</title>
        <authorList>
            <person name="McCormack E."/>
            <person name="Braam J."/>
        </authorList>
    </citation>
    <scope>GENE FAMILY</scope>
    <scope>NOMENCLATURE</scope>
</reference>
<dbReference type="EMBL" id="AC024174">
    <property type="protein sequence ID" value="AAF80122.1"/>
    <property type="molecule type" value="Genomic_DNA"/>
</dbReference>
<dbReference type="EMBL" id="CP002684">
    <property type="protein sequence ID" value="AEE27927.1"/>
    <property type="molecule type" value="Genomic_DNA"/>
</dbReference>
<dbReference type="EMBL" id="AF332466">
    <property type="protein sequence ID" value="AAG48829.1"/>
    <property type="molecule type" value="mRNA"/>
</dbReference>
<dbReference type="PIR" id="H86194">
    <property type="entry name" value="H86194"/>
</dbReference>
<dbReference type="RefSeq" id="NP_172089.1">
    <property type="nucleotide sequence ID" value="NM_100479.3"/>
</dbReference>
<dbReference type="SMR" id="Q9LNE7"/>
<dbReference type="FunCoup" id="Q9LNE7">
    <property type="interactions" value="202"/>
</dbReference>
<dbReference type="STRING" id="3702.Q9LNE7"/>
<dbReference type="PaxDb" id="3702-AT1G05990.1"/>
<dbReference type="ProteomicsDB" id="240909"/>
<dbReference type="EnsemblPlants" id="AT1G05990.1">
    <property type="protein sequence ID" value="AT1G05990.1"/>
    <property type="gene ID" value="AT1G05990"/>
</dbReference>
<dbReference type="GeneID" id="837108"/>
<dbReference type="Gramene" id="AT1G05990.1">
    <property type="protein sequence ID" value="AT1G05990.1"/>
    <property type="gene ID" value="AT1G05990"/>
</dbReference>
<dbReference type="KEGG" id="ath:AT1G05990"/>
<dbReference type="Araport" id="AT1G05990"/>
<dbReference type="TAIR" id="AT1G05990">
    <property type="gene designation" value="RHS2"/>
</dbReference>
<dbReference type="eggNOG" id="KOG0027">
    <property type="taxonomic scope" value="Eukaryota"/>
</dbReference>
<dbReference type="HOGENOM" id="CLU_061288_20_3_1"/>
<dbReference type="InParanoid" id="Q9LNE7"/>
<dbReference type="OMA" id="NYNEFRQ"/>
<dbReference type="OrthoDB" id="26525at2759"/>
<dbReference type="PhylomeDB" id="Q9LNE7"/>
<dbReference type="PRO" id="PR:Q9LNE7"/>
<dbReference type="Proteomes" id="UP000006548">
    <property type="component" value="Chromosome 1"/>
</dbReference>
<dbReference type="ExpressionAtlas" id="Q9LNE7">
    <property type="expression patterns" value="baseline and differential"/>
</dbReference>
<dbReference type="GO" id="GO:0005509">
    <property type="term" value="F:calcium ion binding"/>
    <property type="evidence" value="ECO:0007669"/>
    <property type="project" value="InterPro"/>
</dbReference>
<dbReference type="CDD" id="cd00051">
    <property type="entry name" value="EFh"/>
    <property type="match status" value="2"/>
</dbReference>
<dbReference type="FunFam" id="1.10.238.10:FF:000231">
    <property type="entry name" value="Calmodulin-like protein 3"/>
    <property type="match status" value="1"/>
</dbReference>
<dbReference type="FunFam" id="1.10.238.10:FF:000089">
    <property type="entry name" value="calmodulin-like protein 3"/>
    <property type="match status" value="1"/>
</dbReference>
<dbReference type="Gene3D" id="1.10.238.10">
    <property type="entry name" value="EF-hand"/>
    <property type="match status" value="2"/>
</dbReference>
<dbReference type="InterPro" id="IPR011992">
    <property type="entry name" value="EF-hand-dom_pair"/>
</dbReference>
<dbReference type="InterPro" id="IPR018247">
    <property type="entry name" value="EF_Hand_1_Ca_BS"/>
</dbReference>
<dbReference type="InterPro" id="IPR002048">
    <property type="entry name" value="EF_hand_dom"/>
</dbReference>
<dbReference type="InterPro" id="IPR039647">
    <property type="entry name" value="EF_hand_pair_protein_CML-like"/>
</dbReference>
<dbReference type="PANTHER" id="PTHR10891">
    <property type="entry name" value="EF-HAND CALCIUM-BINDING DOMAIN CONTAINING PROTEIN"/>
    <property type="match status" value="1"/>
</dbReference>
<dbReference type="Pfam" id="PF13499">
    <property type="entry name" value="EF-hand_7"/>
    <property type="match status" value="2"/>
</dbReference>
<dbReference type="PRINTS" id="PR01697">
    <property type="entry name" value="PARVALBUMIN"/>
</dbReference>
<dbReference type="SMART" id="SM00054">
    <property type="entry name" value="EFh"/>
    <property type="match status" value="4"/>
</dbReference>
<dbReference type="SUPFAM" id="SSF47473">
    <property type="entry name" value="EF-hand"/>
    <property type="match status" value="1"/>
</dbReference>
<dbReference type="PROSITE" id="PS00018">
    <property type="entry name" value="EF_HAND_1"/>
    <property type="match status" value="4"/>
</dbReference>
<dbReference type="PROSITE" id="PS50222">
    <property type="entry name" value="EF_HAND_2"/>
    <property type="match status" value="4"/>
</dbReference>
<sequence>MDPTELKRVFQMFDKNGDGTITGKELSETLRSLGIYIPDKELTQMIEKIDVNGDGCVDIDEFGELYKTIMDEEDEEEEDMKEAFNVFDQNGDGFITVDELKAVLSSLGLKQGKTLDDCKKMIKKVDVDGDGRVNYKEFRQMMKGGGFNSL</sequence>
<protein>
    <recommendedName>
        <fullName>Calmodulin-like protein 7</fullName>
    </recommendedName>
</protein>
<proteinExistence type="evidence at transcript level"/>
<evidence type="ECO:0000250" key="1"/>
<evidence type="ECO:0000255" key="2">
    <source>
        <dbReference type="PROSITE-ProRule" id="PRU00448"/>
    </source>
</evidence>
<evidence type="ECO:0000305" key="3"/>
<gene>
    <name type="primary">CML7</name>
    <name type="ordered locus">At1g05990</name>
    <name type="ORF">T21E18.4</name>
</gene>
<comment type="function">
    <text evidence="1">Potential calcium sensor.</text>
</comment>
<comment type="similarity">
    <text evidence="3">Belongs to the calmodulin family.</text>
</comment>
<organism>
    <name type="scientific">Arabidopsis thaliana</name>
    <name type="common">Mouse-ear cress</name>
    <dbReference type="NCBI Taxonomy" id="3702"/>
    <lineage>
        <taxon>Eukaryota</taxon>
        <taxon>Viridiplantae</taxon>
        <taxon>Streptophyta</taxon>
        <taxon>Embryophyta</taxon>
        <taxon>Tracheophyta</taxon>
        <taxon>Spermatophyta</taxon>
        <taxon>Magnoliopsida</taxon>
        <taxon>eudicotyledons</taxon>
        <taxon>Gunneridae</taxon>
        <taxon>Pentapetalae</taxon>
        <taxon>rosids</taxon>
        <taxon>malvids</taxon>
        <taxon>Brassicales</taxon>
        <taxon>Brassicaceae</taxon>
        <taxon>Camelineae</taxon>
        <taxon>Arabidopsis</taxon>
    </lineage>
</organism>
<feature type="chain" id="PRO_0000342890" description="Calmodulin-like protein 7">
    <location>
        <begin position="1"/>
        <end position="150"/>
    </location>
</feature>
<feature type="domain" description="EF-hand 1" evidence="2">
    <location>
        <begin position="1"/>
        <end position="36"/>
    </location>
</feature>
<feature type="domain" description="EF-hand 2" evidence="2">
    <location>
        <begin position="37"/>
        <end position="72"/>
    </location>
</feature>
<feature type="domain" description="EF-hand 3" evidence="2">
    <location>
        <begin position="75"/>
        <end position="110"/>
    </location>
</feature>
<feature type="domain" description="EF-hand 4" evidence="2">
    <location>
        <begin position="113"/>
        <end position="148"/>
    </location>
</feature>
<feature type="binding site" evidence="2">
    <location>
        <position position="14"/>
    </location>
    <ligand>
        <name>Ca(2+)</name>
        <dbReference type="ChEBI" id="CHEBI:29108"/>
        <label>1</label>
    </ligand>
</feature>
<feature type="binding site" evidence="2">
    <location>
        <position position="16"/>
    </location>
    <ligand>
        <name>Ca(2+)</name>
        <dbReference type="ChEBI" id="CHEBI:29108"/>
        <label>1</label>
    </ligand>
</feature>
<feature type="binding site" evidence="2">
    <location>
        <position position="18"/>
    </location>
    <ligand>
        <name>Ca(2+)</name>
        <dbReference type="ChEBI" id="CHEBI:29108"/>
        <label>1</label>
    </ligand>
</feature>
<feature type="binding site" evidence="2">
    <location>
        <position position="20"/>
    </location>
    <ligand>
        <name>Ca(2+)</name>
        <dbReference type="ChEBI" id="CHEBI:29108"/>
        <label>1</label>
    </ligand>
</feature>
<feature type="binding site" evidence="2">
    <location>
        <position position="25"/>
    </location>
    <ligand>
        <name>Ca(2+)</name>
        <dbReference type="ChEBI" id="CHEBI:29108"/>
        <label>1</label>
    </ligand>
</feature>
<feature type="binding site" evidence="2">
    <location>
        <position position="50"/>
    </location>
    <ligand>
        <name>Ca(2+)</name>
        <dbReference type="ChEBI" id="CHEBI:29108"/>
        <label>2</label>
    </ligand>
</feature>
<feature type="binding site" evidence="2">
    <location>
        <position position="52"/>
    </location>
    <ligand>
        <name>Ca(2+)</name>
        <dbReference type="ChEBI" id="CHEBI:29108"/>
        <label>2</label>
    </ligand>
</feature>
<feature type="binding site" evidence="2">
    <location>
        <position position="54"/>
    </location>
    <ligand>
        <name>Ca(2+)</name>
        <dbReference type="ChEBI" id="CHEBI:29108"/>
        <label>2</label>
    </ligand>
</feature>
<feature type="binding site" evidence="2">
    <location>
        <position position="56"/>
    </location>
    <ligand>
        <name>Ca(2+)</name>
        <dbReference type="ChEBI" id="CHEBI:29108"/>
        <label>2</label>
    </ligand>
</feature>
<feature type="binding site" evidence="2">
    <location>
        <position position="61"/>
    </location>
    <ligand>
        <name>Ca(2+)</name>
        <dbReference type="ChEBI" id="CHEBI:29108"/>
        <label>2</label>
    </ligand>
</feature>
<feature type="binding site" evidence="2">
    <location>
        <position position="88"/>
    </location>
    <ligand>
        <name>Ca(2+)</name>
        <dbReference type="ChEBI" id="CHEBI:29108"/>
        <label>3</label>
    </ligand>
</feature>
<feature type="binding site" evidence="2">
    <location>
        <position position="90"/>
    </location>
    <ligand>
        <name>Ca(2+)</name>
        <dbReference type="ChEBI" id="CHEBI:29108"/>
        <label>3</label>
    </ligand>
</feature>
<feature type="binding site" evidence="2">
    <location>
        <position position="92"/>
    </location>
    <ligand>
        <name>Ca(2+)</name>
        <dbReference type="ChEBI" id="CHEBI:29108"/>
        <label>3</label>
    </ligand>
</feature>
<feature type="binding site" evidence="2">
    <location>
        <position position="99"/>
    </location>
    <ligand>
        <name>Ca(2+)</name>
        <dbReference type="ChEBI" id="CHEBI:29108"/>
        <label>3</label>
    </ligand>
</feature>
<feature type="binding site" evidence="2">
    <location>
        <position position="126"/>
    </location>
    <ligand>
        <name>Ca(2+)</name>
        <dbReference type="ChEBI" id="CHEBI:29108"/>
        <label>4</label>
    </ligand>
</feature>
<feature type="binding site" evidence="2">
    <location>
        <position position="128"/>
    </location>
    <ligand>
        <name>Ca(2+)</name>
        <dbReference type="ChEBI" id="CHEBI:29108"/>
        <label>4</label>
    </ligand>
</feature>
<feature type="binding site" evidence="2">
    <location>
        <position position="130"/>
    </location>
    <ligand>
        <name>Ca(2+)</name>
        <dbReference type="ChEBI" id="CHEBI:29108"/>
        <label>4</label>
    </ligand>
</feature>
<feature type="binding site" evidence="2">
    <location>
        <position position="132"/>
    </location>
    <ligand>
        <name>Ca(2+)</name>
        <dbReference type="ChEBI" id="CHEBI:29108"/>
        <label>4</label>
    </ligand>
</feature>
<feature type="binding site" evidence="2">
    <location>
        <position position="137"/>
    </location>
    <ligand>
        <name>Ca(2+)</name>
        <dbReference type="ChEBI" id="CHEBI:29108"/>
        <label>4</label>
    </ligand>
</feature>
<keyword id="KW-0106">Calcium</keyword>
<keyword id="KW-0479">Metal-binding</keyword>
<keyword id="KW-1185">Reference proteome</keyword>
<keyword id="KW-0677">Repeat</keyword>
<accession>Q9LNE7</accession>